<evidence type="ECO:0000255" key="1">
    <source>
        <dbReference type="HAMAP-Rule" id="MF_01290"/>
    </source>
</evidence>
<accession>B5RCB4</accession>
<proteinExistence type="inferred from homology"/>
<name>RHMA_SALG2</name>
<feature type="chain" id="PRO_1000140399" description="2-keto-3-deoxy-L-rhamnonate aldolase">
    <location>
        <begin position="1"/>
        <end position="267"/>
    </location>
</feature>
<feature type="active site" description="Proton acceptor" evidence="1">
    <location>
        <position position="49"/>
    </location>
</feature>
<feature type="binding site" evidence="1">
    <location>
        <position position="151"/>
    </location>
    <ligand>
        <name>substrate</name>
    </ligand>
</feature>
<feature type="binding site" evidence="1">
    <location>
        <position position="153"/>
    </location>
    <ligand>
        <name>Mg(2+)</name>
        <dbReference type="ChEBI" id="CHEBI:18420"/>
    </ligand>
</feature>
<feature type="binding site" evidence="1">
    <location>
        <position position="178"/>
    </location>
    <ligand>
        <name>substrate</name>
    </ligand>
</feature>
<feature type="binding site" evidence="1">
    <location>
        <position position="179"/>
    </location>
    <ligand>
        <name>Mg(2+)</name>
        <dbReference type="ChEBI" id="CHEBI:18420"/>
    </ligand>
</feature>
<feature type="binding site" evidence="1">
    <location>
        <position position="179"/>
    </location>
    <ligand>
        <name>substrate</name>
    </ligand>
</feature>
<feature type="site" description="Transition state stabilizer" evidence="1">
    <location>
        <position position="74"/>
    </location>
</feature>
<feature type="site" description="Increases basicity of active site His" evidence="1">
    <location>
        <position position="88"/>
    </location>
</feature>
<organism>
    <name type="scientific">Salmonella gallinarum (strain 287/91 / NCTC 13346)</name>
    <dbReference type="NCBI Taxonomy" id="550538"/>
    <lineage>
        <taxon>Bacteria</taxon>
        <taxon>Pseudomonadati</taxon>
        <taxon>Pseudomonadota</taxon>
        <taxon>Gammaproteobacteria</taxon>
        <taxon>Enterobacterales</taxon>
        <taxon>Enterobacteriaceae</taxon>
        <taxon>Salmonella</taxon>
    </lineage>
</organism>
<comment type="function">
    <text evidence="1">Catalyzes the reversible retro-aldol cleavage of 2-keto-3-deoxy-L-rhamnonate (KDR) to pyruvate and lactaldehyde.</text>
</comment>
<comment type="catalytic activity">
    <reaction evidence="1">
        <text>2-dehydro-3-deoxy-L-rhamnonate = (S)-lactaldehyde + pyruvate</text>
        <dbReference type="Rhea" id="RHEA:25784"/>
        <dbReference type="ChEBI" id="CHEBI:15361"/>
        <dbReference type="ChEBI" id="CHEBI:18041"/>
        <dbReference type="ChEBI" id="CHEBI:58371"/>
        <dbReference type="EC" id="4.1.2.53"/>
    </reaction>
</comment>
<comment type="cofactor">
    <cofactor evidence="1">
        <name>Mg(2+)</name>
        <dbReference type="ChEBI" id="CHEBI:18420"/>
    </cofactor>
    <text evidence="1">Binds 1 Mg(2+) ion per subunit.</text>
</comment>
<comment type="subunit">
    <text evidence="1">Homohexamer.</text>
</comment>
<comment type="similarity">
    <text evidence="1">Belongs to the HpcH/HpaI aldolase family. KDR aldolase subfamily.</text>
</comment>
<keyword id="KW-0456">Lyase</keyword>
<keyword id="KW-0460">Magnesium</keyword>
<keyword id="KW-0479">Metal-binding</keyword>
<dbReference type="EC" id="4.1.2.53" evidence="1"/>
<dbReference type="EMBL" id="AM933173">
    <property type="protein sequence ID" value="CAR38148.1"/>
    <property type="molecule type" value="Genomic_DNA"/>
</dbReference>
<dbReference type="SMR" id="B5RCB4"/>
<dbReference type="KEGG" id="seg:SG2317"/>
<dbReference type="HOGENOM" id="CLU_059964_1_0_6"/>
<dbReference type="Proteomes" id="UP000008321">
    <property type="component" value="Chromosome"/>
</dbReference>
<dbReference type="GO" id="GO:0005737">
    <property type="term" value="C:cytoplasm"/>
    <property type="evidence" value="ECO:0007669"/>
    <property type="project" value="TreeGrafter"/>
</dbReference>
<dbReference type="GO" id="GO:0106099">
    <property type="term" value="F:2-keto-3-deoxy-L-rhamnonate aldolase activity"/>
    <property type="evidence" value="ECO:0007669"/>
    <property type="project" value="UniProtKB-EC"/>
</dbReference>
<dbReference type="GO" id="GO:0000287">
    <property type="term" value="F:magnesium ion binding"/>
    <property type="evidence" value="ECO:0007669"/>
    <property type="project" value="UniProtKB-UniRule"/>
</dbReference>
<dbReference type="FunFam" id="3.20.20.60:FF:000004">
    <property type="entry name" value="5-keto-4-deoxy-D-glucarate aldolase"/>
    <property type="match status" value="1"/>
</dbReference>
<dbReference type="Gene3D" id="3.20.20.60">
    <property type="entry name" value="Phosphoenolpyruvate-binding domains"/>
    <property type="match status" value="1"/>
</dbReference>
<dbReference type="HAMAP" id="MF_01290">
    <property type="entry name" value="KDR_aldolase"/>
    <property type="match status" value="1"/>
</dbReference>
<dbReference type="InterPro" id="IPR005000">
    <property type="entry name" value="Aldolase/citrate-lyase_domain"/>
</dbReference>
<dbReference type="InterPro" id="IPR050251">
    <property type="entry name" value="HpcH-HpaI_aldolase"/>
</dbReference>
<dbReference type="InterPro" id="IPR023593">
    <property type="entry name" value="KDR_aldolase"/>
</dbReference>
<dbReference type="InterPro" id="IPR015813">
    <property type="entry name" value="Pyrv/PenolPyrv_kinase-like_dom"/>
</dbReference>
<dbReference type="InterPro" id="IPR040442">
    <property type="entry name" value="Pyrv_kinase-like_dom_sf"/>
</dbReference>
<dbReference type="NCBIfam" id="NF007521">
    <property type="entry name" value="PRK10128.1"/>
    <property type="match status" value="1"/>
</dbReference>
<dbReference type="PANTHER" id="PTHR30502">
    <property type="entry name" value="2-KETO-3-DEOXY-L-RHAMNONATE ALDOLASE"/>
    <property type="match status" value="1"/>
</dbReference>
<dbReference type="PANTHER" id="PTHR30502:SF5">
    <property type="entry name" value="2-KETO-3-DEOXY-L-RHAMNONATE ALDOLASE"/>
    <property type="match status" value="1"/>
</dbReference>
<dbReference type="Pfam" id="PF03328">
    <property type="entry name" value="HpcH_HpaI"/>
    <property type="match status" value="1"/>
</dbReference>
<dbReference type="SUPFAM" id="SSF51621">
    <property type="entry name" value="Phosphoenolpyruvate/pyruvate domain"/>
    <property type="match status" value="1"/>
</dbReference>
<protein>
    <recommendedName>
        <fullName evidence="1">2-keto-3-deoxy-L-rhamnonate aldolase</fullName>
        <shortName evidence="1">KDR aldolase</shortName>
        <ecNumber evidence="1">4.1.2.53</ecNumber>
    </recommendedName>
    <alternativeName>
        <fullName evidence="1">2-dehydro-3-deoxyrhamnonate aldolase</fullName>
    </alternativeName>
</protein>
<sequence length="267" mass="28760">MNALLSNPFKEGLREGDTQIGLWLSSTTSYMAEIAATSGYDWLLIDGEHAPNTVQDLYHQLQAIAPYASQPVIRLIEGSKALIKQVLDIGAQTLLIPMVDTAEQARQVVSATRYPPLGQRGVGASVARAARWGRIDNYMAQANESLCLLVQVESKVALENLDAILEVEGIDGVFIGPADLSASLGYPDNAGHPEVQRIIESCIYRIRAAGKAAGFLAVDPAMAQKCLAWGANFVAVGVDTMLYTEALDSRLAMFKSVQSVSTAKRSY</sequence>
<gene>
    <name evidence="1" type="primary">rhmA</name>
    <name type="ordered locus">SG2317</name>
</gene>
<reference key="1">
    <citation type="journal article" date="2008" name="Genome Res.">
        <title>Comparative genome analysis of Salmonella enteritidis PT4 and Salmonella gallinarum 287/91 provides insights into evolutionary and host adaptation pathways.</title>
        <authorList>
            <person name="Thomson N.R."/>
            <person name="Clayton D.J."/>
            <person name="Windhorst D."/>
            <person name="Vernikos G."/>
            <person name="Davidson S."/>
            <person name="Churcher C."/>
            <person name="Quail M.A."/>
            <person name="Stevens M."/>
            <person name="Jones M.A."/>
            <person name="Watson M."/>
            <person name="Barron A."/>
            <person name="Layton A."/>
            <person name="Pickard D."/>
            <person name="Kingsley R.A."/>
            <person name="Bignell A."/>
            <person name="Clark L."/>
            <person name="Harris B."/>
            <person name="Ormond D."/>
            <person name="Abdellah Z."/>
            <person name="Brooks K."/>
            <person name="Cherevach I."/>
            <person name="Chillingworth T."/>
            <person name="Woodward J."/>
            <person name="Norberczak H."/>
            <person name="Lord A."/>
            <person name="Arrowsmith C."/>
            <person name="Jagels K."/>
            <person name="Moule S."/>
            <person name="Mungall K."/>
            <person name="Saunders M."/>
            <person name="Whitehead S."/>
            <person name="Chabalgoity J.A."/>
            <person name="Maskell D."/>
            <person name="Humphreys T."/>
            <person name="Roberts M."/>
            <person name="Barrow P.A."/>
            <person name="Dougan G."/>
            <person name="Parkhill J."/>
        </authorList>
    </citation>
    <scope>NUCLEOTIDE SEQUENCE [LARGE SCALE GENOMIC DNA]</scope>
    <source>
        <strain>287/91 / NCTC 13346</strain>
    </source>
</reference>